<proteinExistence type="inferred from homology"/>
<name>UVRB_CHLAB</name>
<evidence type="ECO:0000255" key="1">
    <source>
        <dbReference type="HAMAP-Rule" id="MF_00204"/>
    </source>
</evidence>
<accession>Q5L4S6</accession>
<reference key="1">
    <citation type="journal article" date="2005" name="Genome Res.">
        <title>The Chlamydophila abortus genome sequence reveals an array of variable proteins that contribute to interspecies variation.</title>
        <authorList>
            <person name="Thomson N.R."/>
            <person name="Yeats C."/>
            <person name="Bell K."/>
            <person name="Holden M.T.G."/>
            <person name="Bentley S.D."/>
            <person name="Livingstone M."/>
            <person name="Cerdeno-Tarraga A.-M."/>
            <person name="Harris B."/>
            <person name="Doggett J."/>
            <person name="Ormond D."/>
            <person name="Mungall K."/>
            <person name="Clarke K."/>
            <person name="Feltwell T."/>
            <person name="Hance Z."/>
            <person name="Sanders M."/>
            <person name="Quail M.A."/>
            <person name="Price C."/>
            <person name="Barrell B.G."/>
            <person name="Parkhill J."/>
            <person name="Longbottom D."/>
        </authorList>
    </citation>
    <scope>NUCLEOTIDE SEQUENCE [LARGE SCALE GENOMIC DNA]</scope>
    <source>
        <strain>DSM 27085 / S26/3</strain>
    </source>
</reference>
<comment type="function">
    <text evidence="1">The UvrABC repair system catalyzes the recognition and processing of DNA lesions. A damage recognition complex composed of 2 UvrA and 2 UvrB subunits scans DNA for abnormalities. Upon binding of the UvrA(2)B(2) complex to a putative damaged site, the DNA wraps around one UvrB monomer. DNA wrap is dependent on ATP binding by UvrB and probably causes local melting of the DNA helix, facilitating insertion of UvrB beta-hairpin between the DNA strands. Then UvrB probes one DNA strand for the presence of a lesion. If a lesion is found the UvrA subunits dissociate and the UvrB-DNA preincision complex is formed. This complex is subsequently bound by UvrC and the second UvrB is released. If no lesion is found, the DNA wraps around the other UvrB subunit that will check the other stand for damage.</text>
</comment>
<comment type="subunit">
    <text evidence="1">Forms a heterotetramer with UvrA during the search for lesions. Interacts with UvrC in an incision complex.</text>
</comment>
<comment type="subcellular location">
    <subcellularLocation>
        <location evidence="1">Cytoplasm</location>
    </subcellularLocation>
</comment>
<comment type="domain">
    <text evidence="1">The beta-hairpin motif is involved in DNA binding.</text>
</comment>
<comment type="similarity">
    <text evidence="1">Belongs to the UvrB family.</text>
</comment>
<sequence length="656" mass="74484">MTFELRAAFSPCGDQPEAIAKLTQGVRNRTPSQVLLGTTGSGKTFTIANVVANVNRPTLVLAHNKTLAAQLYQEFKEFFPNNAVEYFISYYDYYQPEAYIARNDTYIEKSLLINSEIDKLRLSATRSILERRDTLIVSSVSCIYGIGSPENYTSMALELTVGTEYPRALLASQLVKMHYQASSVPQRSTFRERGSVIDIFPAYESELAIRLEFFNDTLTSIDYSDPLTMMPKESVTSVILYPGSHYVTPEAVREQAIRSIREELEERLAFFQDRPIEQDRLFHRTTHDIEMIKETGFCKGIENYSRHFTNTPPGAPPTCLLDYFPEDFLLVIDESHQTLPQIRAMYRGDFSRKQSLVEYGFRLPSAYDNRPLTYEEARKYFHNVIYVSATPGETELNESQGHIVEQILRPTGIPDPIPEIRPATGQVDDLLEEIRKRLSKSQEKILVISITKKLAEDIAAFLSELDIAAAYLHSGIETAERTRILSDLRLGNIDVLIGVNLLREGLDLPEVSLVAILDADKEGFLRSTSSLIQFCGRAARNVDGKVIFYADHKTLSIEQTLKETERRRHIQLEYNKANNITPKPIIKAIFANPIPQGGKKAVQDTPQKPLSTQELEKLIKKYENLMLQAANAFRFDEAAQYRDKMKAAKEQLLYLS</sequence>
<protein>
    <recommendedName>
        <fullName evidence="1">UvrABC system protein B</fullName>
        <shortName evidence="1">Protein UvrB</shortName>
    </recommendedName>
    <alternativeName>
        <fullName evidence="1">Excinuclease ABC subunit B</fullName>
    </alternativeName>
</protein>
<feature type="chain" id="PRO_0000227299" description="UvrABC system protein B">
    <location>
        <begin position="1"/>
        <end position="656"/>
    </location>
</feature>
<feature type="domain" description="Helicase ATP-binding" evidence="1">
    <location>
        <begin position="24"/>
        <end position="409"/>
    </location>
</feature>
<feature type="domain" description="Helicase C-terminal" evidence="1">
    <location>
        <begin position="426"/>
        <end position="589"/>
    </location>
</feature>
<feature type="domain" description="UVR" evidence="1">
    <location>
        <begin position="616"/>
        <end position="651"/>
    </location>
</feature>
<feature type="short sequence motif" description="Beta-hairpin">
    <location>
        <begin position="90"/>
        <end position="113"/>
    </location>
</feature>
<feature type="binding site" evidence="1">
    <location>
        <begin position="37"/>
        <end position="44"/>
    </location>
    <ligand>
        <name>ATP</name>
        <dbReference type="ChEBI" id="CHEBI:30616"/>
    </ligand>
</feature>
<organism>
    <name type="scientific">Chlamydia abortus (strain DSM 27085 / S26/3)</name>
    <name type="common">Chlamydophila abortus</name>
    <dbReference type="NCBI Taxonomy" id="218497"/>
    <lineage>
        <taxon>Bacteria</taxon>
        <taxon>Pseudomonadati</taxon>
        <taxon>Chlamydiota</taxon>
        <taxon>Chlamydiia</taxon>
        <taxon>Chlamydiales</taxon>
        <taxon>Chlamydiaceae</taxon>
        <taxon>Chlamydia/Chlamydophila group</taxon>
        <taxon>Chlamydia</taxon>
    </lineage>
</organism>
<dbReference type="EMBL" id="CR848038">
    <property type="protein sequence ID" value="CAH64370.1"/>
    <property type="molecule type" value="Genomic_DNA"/>
</dbReference>
<dbReference type="RefSeq" id="WP_011097431.1">
    <property type="nucleotide sequence ID" value="NC_004552.2"/>
</dbReference>
<dbReference type="SMR" id="Q5L4S6"/>
<dbReference type="KEGG" id="cab:CAB931"/>
<dbReference type="eggNOG" id="COG0556">
    <property type="taxonomic scope" value="Bacteria"/>
</dbReference>
<dbReference type="HOGENOM" id="CLU_009621_2_1_0"/>
<dbReference type="OrthoDB" id="9806651at2"/>
<dbReference type="Proteomes" id="UP000001012">
    <property type="component" value="Chromosome"/>
</dbReference>
<dbReference type="GO" id="GO:0005737">
    <property type="term" value="C:cytoplasm"/>
    <property type="evidence" value="ECO:0007669"/>
    <property type="project" value="UniProtKB-SubCell"/>
</dbReference>
<dbReference type="GO" id="GO:0009380">
    <property type="term" value="C:excinuclease repair complex"/>
    <property type="evidence" value="ECO:0007669"/>
    <property type="project" value="InterPro"/>
</dbReference>
<dbReference type="GO" id="GO:0005524">
    <property type="term" value="F:ATP binding"/>
    <property type="evidence" value="ECO:0007669"/>
    <property type="project" value="UniProtKB-UniRule"/>
</dbReference>
<dbReference type="GO" id="GO:0016887">
    <property type="term" value="F:ATP hydrolysis activity"/>
    <property type="evidence" value="ECO:0007669"/>
    <property type="project" value="InterPro"/>
</dbReference>
<dbReference type="GO" id="GO:0003677">
    <property type="term" value="F:DNA binding"/>
    <property type="evidence" value="ECO:0007669"/>
    <property type="project" value="UniProtKB-UniRule"/>
</dbReference>
<dbReference type="GO" id="GO:0009381">
    <property type="term" value="F:excinuclease ABC activity"/>
    <property type="evidence" value="ECO:0007669"/>
    <property type="project" value="UniProtKB-UniRule"/>
</dbReference>
<dbReference type="GO" id="GO:0006289">
    <property type="term" value="P:nucleotide-excision repair"/>
    <property type="evidence" value="ECO:0007669"/>
    <property type="project" value="UniProtKB-UniRule"/>
</dbReference>
<dbReference type="GO" id="GO:0009432">
    <property type="term" value="P:SOS response"/>
    <property type="evidence" value="ECO:0007669"/>
    <property type="project" value="UniProtKB-UniRule"/>
</dbReference>
<dbReference type="CDD" id="cd17916">
    <property type="entry name" value="DEXHc_UvrB"/>
    <property type="match status" value="1"/>
</dbReference>
<dbReference type="CDD" id="cd18790">
    <property type="entry name" value="SF2_C_UvrB"/>
    <property type="match status" value="1"/>
</dbReference>
<dbReference type="Gene3D" id="3.40.50.300">
    <property type="entry name" value="P-loop containing nucleotide triphosphate hydrolases"/>
    <property type="match status" value="3"/>
</dbReference>
<dbReference type="Gene3D" id="4.10.860.10">
    <property type="entry name" value="UVR domain"/>
    <property type="match status" value="1"/>
</dbReference>
<dbReference type="HAMAP" id="MF_00204">
    <property type="entry name" value="UvrB"/>
    <property type="match status" value="1"/>
</dbReference>
<dbReference type="InterPro" id="IPR006935">
    <property type="entry name" value="Helicase/UvrB_N"/>
</dbReference>
<dbReference type="InterPro" id="IPR014001">
    <property type="entry name" value="Helicase_ATP-bd"/>
</dbReference>
<dbReference type="InterPro" id="IPR001650">
    <property type="entry name" value="Helicase_C-like"/>
</dbReference>
<dbReference type="InterPro" id="IPR027417">
    <property type="entry name" value="P-loop_NTPase"/>
</dbReference>
<dbReference type="InterPro" id="IPR001943">
    <property type="entry name" value="UVR_dom"/>
</dbReference>
<dbReference type="InterPro" id="IPR036876">
    <property type="entry name" value="UVR_dom_sf"/>
</dbReference>
<dbReference type="InterPro" id="IPR004807">
    <property type="entry name" value="UvrB"/>
</dbReference>
<dbReference type="InterPro" id="IPR041471">
    <property type="entry name" value="UvrB_inter"/>
</dbReference>
<dbReference type="InterPro" id="IPR024759">
    <property type="entry name" value="UvrB_YAD/RRR_dom"/>
</dbReference>
<dbReference type="NCBIfam" id="NF003673">
    <property type="entry name" value="PRK05298.1"/>
    <property type="match status" value="1"/>
</dbReference>
<dbReference type="NCBIfam" id="TIGR00631">
    <property type="entry name" value="uvrb"/>
    <property type="match status" value="1"/>
</dbReference>
<dbReference type="PANTHER" id="PTHR24029">
    <property type="entry name" value="UVRABC SYSTEM PROTEIN B"/>
    <property type="match status" value="1"/>
</dbReference>
<dbReference type="PANTHER" id="PTHR24029:SF0">
    <property type="entry name" value="UVRABC SYSTEM PROTEIN B"/>
    <property type="match status" value="1"/>
</dbReference>
<dbReference type="Pfam" id="PF00271">
    <property type="entry name" value="Helicase_C"/>
    <property type="match status" value="1"/>
</dbReference>
<dbReference type="Pfam" id="PF04851">
    <property type="entry name" value="ResIII"/>
    <property type="match status" value="1"/>
</dbReference>
<dbReference type="Pfam" id="PF02151">
    <property type="entry name" value="UVR"/>
    <property type="match status" value="1"/>
</dbReference>
<dbReference type="Pfam" id="PF12344">
    <property type="entry name" value="UvrB"/>
    <property type="match status" value="1"/>
</dbReference>
<dbReference type="Pfam" id="PF17757">
    <property type="entry name" value="UvrB_inter"/>
    <property type="match status" value="1"/>
</dbReference>
<dbReference type="SMART" id="SM00487">
    <property type="entry name" value="DEXDc"/>
    <property type="match status" value="1"/>
</dbReference>
<dbReference type="SMART" id="SM00490">
    <property type="entry name" value="HELICc"/>
    <property type="match status" value="1"/>
</dbReference>
<dbReference type="SUPFAM" id="SSF46600">
    <property type="entry name" value="C-terminal UvrC-binding domain of UvrB"/>
    <property type="match status" value="1"/>
</dbReference>
<dbReference type="SUPFAM" id="SSF52540">
    <property type="entry name" value="P-loop containing nucleoside triphosphate hydrolases"/>
    <property type="match status" value="2"/>
</dbReference>
<dbReference type="PROSITE" id="PS51192">
    <property type="entry name" value="HELICASE_ATP_BIND_1"/>
    <property type="match status" value="1"/>
</dbReference>
<dbReference type="PROSITE" id="PS51194">
    <property type="entry name" value="HELICASE_CTER"/>
    <property type="match status" value="1"/>
</dbReference>
<dbReference type="PROSITE" id="PS50151">
    <property type="entry name" value="UVR"/>
    <property type="match status" value="1"/>
</dbReference>
<gene>
    <name evidence="1" type="primary">uvrB</name>
    <name type="ordered locus">CAB931</name>
</gene>
<keyword id="KW-0067">ATP-binding</keyword>
<keyword id="KW-0963">Cytoplasm</keyword>
<keyword id="KW-0227">DNA damage</keyword>
<keyword id="KW-0228">DNA excision</keyword>
<keyword id="KW-0234">DNA repair</keyword>
<keyword id="KW-0267">Excision nuclease</keyword>
<keyword id="KW-0547">Nucleotide-binding</keyword>
<keyword id="KW-0742">SOS response</keyword>